<dbReference type="EMBL" id="U00090">
    <property type="protein sequence ID" value="AAB91918.1"/>
    <property type="molecule type" value="Genomic_DNA"/>
</dbReference>
<dbReference type="RefSeq" id="NP_444131.1">
    <property type="nucleotide sequence ID" value="NC_000914.2"/>
</dbReference>
<dbReference type="KEGG" id="rhi:NGR_a00940"/>
<dbReference type="PATRIC" id="fig|394.7.peg.84"/>
<dbReference type="eggNOG" id="ENOG50330W8">
    <property type="taxonomic scope" value="Bacteria"/>
</dbReference>
<dbReference type="HOGENOM" id="CLU_145318_0_0_5"/>
<dbReference type="OrthoDB" id="9811868at2"/>
<dbReference type="Proteomes" id="UP000001054">
    <property type="component" value="Plasmid pNGR234a"/>
</dbReference>
<dbReference type="GO" id="GO:0009399">
    <property type="term" value="P:nitrogen fixation"/>
    <property type="evidence" value="ECO:0007669"/>
    <property type="project" value="UniProtKB-UniRule"/>
</dbReference>
<dbReference type="HAMAP" id="MF_00529">
    <property type="entry name" value="NifW"/>
    <property type="match status" value="1"/>
</dbReference>
<dbReference type="InterPro" id="IPR004893">
    <property type="entry name" value="NifW"/>
</dbReference>
<dbReference type="NCBIfam" id="NF002009">
    <property type="entry name" value="PRK00810.1"/>
    <property type="match status" value="1"/>
</dbReference>
<dbReference type="Pfam" id="PF03206">
    <property type="entry name" value="NifW"/>
    <property type="match status" value="1"/>
</dbReference>
<protein>
    <recommendedName>
        <fullName>Nitrogenase-stabilizing/protective protein NifW</fullName>
    </recommendedName>
</protein>
<gene>
    <name type="primary">nifW</name>
    <name type="ordered locus">NGR_a00940</name>
    <name type="ORF">y4wK</name>
</gene>
<accession>P55689</accession>
<feature type="chain" id="PRO_0000219538" description="Nitrogenase-stabilizing/protective protein NifW">
    <location>
        <begin position="1"/>
        <end position="150"/>
    </location>
</feature>
<reference key="1">
    <citation type="journal article" date="1997" name="Nature">
        <title>Molecular basis of symbiosis between Rhizobium and legumes.</title>
        <authorList>
            <person name="Freiberg C.A."/>
            <person name="Fellay R."/>
            <person name="Bairoch A."/>
            <person name="Broughton W.J."/>
            <person name="Rosenthal A."/>
            <person name="Perret X."/>
        </authorList>
    </citation>
    <scope>NUCLEOTIDE SEQUENCE [LARGE SCALE GENOMIC DNA]</scope>
    <source>
        <strain>NBRC 101917 / NGR234</strain>
    </source>
</reference>
<reference key="2">
    <citation type="journal article" date="2009" name="Appl. Environ. Microbiol.">
        <title>Rhizobium sp. strain NGR234 possesses a remarkable number of secretion systems.</title>
        <authorList>
            <person name="Schmeisser C."/>
            <person name="Liesegang H."/>
            <person name="Krysciak D."/>
            <person name="Bakkou N."/>
            <person name="Le Quere A."/>
            <person name="Wollherr A."/>
            <person name="Heinemeyer I."/>
            <person name="Morgenstern B."/>
            <person name="Pommerening-Roeser A."/>
            <person name="Flores M."/>
            <person name="Palacios R."/>
            <person name="Brenner S."/>
            <person name="Gottschalk G."/>
            <person name="Schmitz R.A."/>
            <person name="Broughton W.J."/>
            <person name="Perret X."/>
            <person name="Strittmatter A.W."/>
            <person name="Streit W.R."/>
        </authorList>
    </citation>
    <scope>NUCLEOTIDE SEQUENCE [LARGE SCALE GENOMIC DNA]</scope>
    <source>
        <strain>NBRC 101917 / NGR234</strain>
    </source>
</reference>
<sequence>MSYDDATFAPDGTDILTWLKDLSAAEEFFDALGVTYDPKVLNTSRLHIMKRMGQYLVAEDFSDLPTGTAATRARAALERAYRDFATSSPLKHRVFKVLEDRDPTKAAAPIQVFVPLEELLQPSEISDCGGVATQRCHQSDKVVAAPDALE</sequence>
<evidence type="ECO:0000250" key="1"/>
<evidence type="ECO:0000305" key="2"/>
<keyword id="KW-0535">Nitrogen fixation</keyword>
<keyword id="KW-0614">Plasmid</keyword>
<keyword id="KW-1185">Reference proteome</keyword>
<organism>
    <name type="scientific">Sinorhizobium fredii (strain NBRC 101917 / NGR234)</name>
    <dbReference type="NCBI Taxonomy" id="394"/>
    <lineage>
        <taxon>Bacteria</taxon>
        <taxon>Pseudomonadati</taxon>
        <taxon>Pseudomonadota</taxon>
        <taxon>Alphaproteobacteria</taxon>
        <taxon>Hyphomicrobiales</taxon>
        <taxon>Rhizobiaceae</taxon>
        <taxon>Sinorhizobium/Ensifer group</taxon>
        <taxon>Sinorhizobium</taxon>
    </lineage>
</organism>
<comment type="function">
    <text evidence="1">May protect the nitrogenase Fe-Mo protein from oxidative damage.</text>
</comment>
<comment type="subunit">
    <text evidence="1">Homotrimer; associates with NifD.</text>
</comment>
<comment type="similarity">
    <text evidence="2">Belongs to the NifW family.</text>
</comment>
<geneLocation type="plasmid">
    <name>sym pNGR234a</name>
</geneLocation>
<name>NIFW_SINFN</name>
<proteinExistence type="inferred from homology"/>